<dbReference type="EMBL" id="AF019767">
    <property type="protein sequence ID" value="AAC33514.1"/>
    <property type="molecule type" value="mRNA"/>
</dbReference>
<dbReference type="EMBL" id="BT006642">
    <property type="protein sequence ID" value="AAP35288.1"/>
    <property type="molecule type" value="mRNA"/>
</dbReference>
<dbReference type="EMBL" id="BC004256">
    <property type="protein sequence ID" value="AAH04256.1"/>
    <property type="molecule type" value="mRNA"/>
</dbReference>
<dbReference type="EMBL" id="BC012162">
    <property type="protein sequence ID" value="AAH12162.1"/>
    <property type="molecule type" value="mRNA"/>
</dbReference>
<dbReference type="EMBL" id="BC017349">
    <property type="protein sequence ID" value="AAH17349.1"/>
    <property type="molecule type" value="mRNA"/>
</dbReference>
<dbReference type="EMBL" id="BC017380">
    <property type="protein sequence ID" value="AAH17380.1"/>
    <property type="molecule type" value="mRNA"/>
</dbReference>
<dbReference type="EMBL" id="BC111028">
    <property type="protein sequence ID" value="AAI11029.1"/>
    <property type="molecule type" value="mRNA"/>
</dbReference>
<dbReference type="CCDS" id="CCDS8375.1"/>
<dbReference type="RefSeq" id="NP_001304015.1">
    <property type="nucleotide sequence ID" value="NM_001317086.1"/>
</dbReference>
<dbReference type="RefSeq" id="NP_003895.1">
    <property type="nucleotide sequence ID" value="NM_003904.5"/>
</dbReference>
<dbReference type="SMR" id="O75312"/>
<dbReference type="BioGRID" id="114401">
    <property type="interactions" value="97"/>
</dbReference>
<dbReference type="CORUM" id="O75312"/>
<dbReference type="FunCoup" id="O75312">
    <property type="interactions" value="3016"/>
</dbReference>
<dbReference type="IntAct" id="O75312">
    <property type="interactions" value="11"/>
</dbReference>
<dbReference type="MINT" id="O75312"/>
<dbReference type="STRING" id="9606.ENSP00000227322"/>
<dbReference type="GlyGen" id="O75312">
    <property type="glycosylation" value="1 site, 1 O-linked glycan (1 site)"/>
</dbReference>
<dbReference type="iPTMnet" id="O75312"/>
<dbReference type="MetOSite" id="O75312"/>
<dbReference type="PhosphoSitePlus" id="O75312"/>
<dbReference type="SwissPalm" id="O75312"/>
<dbReference type="BioMuta" id="ZPR1"/>
<dbReference type="jPOST" id="O75312"/>
<dbReference type="MassIVE" id="O75312"/>
<dbReference type="PaxDb" id="9606-ENSP00000227322"/>
<dbReference type="PeptideAtlas" id="O75312"/>
<dbReference type="ProteomicsDB" id="49889"/>
<dbReference type="Pumba" id="O75312"/>
<dbReference type="Antibodypedia" id="18410">
    <property type="antibodies" value="271 antibodies from 28 providers"/>
</dbReference>
<dbReference type="DNASU" id="8882"/>
<dbReference type="Ensembl" id="ENST00000227322.8">
    <property type="protein sequence ID" value="ENSP00000227322.3"/>
    <property type="gene ID" value="ENSG00000109917.11"/>
</dbReference>
<dbReference type="GeneID" id="8882"/>
<dbReference type="KEGG" id="hsa:8882"/>
<dbReference type="MANE-Select" id="ENST00000227322.8">
    <property type="protein sequence ID" value="ENSP00000227322.3"/>
    <property type="RefSeq nucleotide sequence ID" value="NM_003904.5"/>
    <property type="RefSeq protein sequence ID" value="NP_003895.1"/>
</dbReference>
<dbReference type="UCSC" id="uc001ppp.4">
    <property type="organism name" value="human"/>
</dbReference>
<dbReference type="AGR" id="HGNC:13051"/>
<dbReference type="CTD" id="8882"/>
<dbReference type="DisGeNET" id="8882"/>
<dbReference type="GeneCards" id="ZPR1"/>
<dbReference type="HGNC" id="HGNC:13051">
    <property type="gene designation" value="ZPR1"/>
</dbReference>
<dbReference type="HPA" id="ENSG00000109917">
    <property type="expression patterns" value="Low tissue specificity"/>
</dbReference>
<dbReference type="MalaCards" id="ZPR1"/>
<dbReference type="MIM" id="603901">
    <property type="type" value="gene"/>
</dbReference>
<dbReference type="MIM" id="619321">
    <property type="type" value="phenotype"/>
</dbReference>
<dbReference type="neXtProt" id="NX_O75312"/>
<dbReference type="OpenTargets" id="ENSG00000109917"/>
<dbReference type="PharmGKB" id="PA37629"/>
<dbReference type="VEuPathDB" id="HostDB:ENSG00000109917"/>
<dbReference type="eggNOG" id="KOG2703">
    <property type="taxonomic scope" value="Eukaryota"/>
</dbReference>
<dbReference type="GeneTree" id="ENSGT00390000005306"/>
<dbReference type="HOGENOM" id="CLU_024138_5_0_1"/>
<dbReference type="InParanoid" id="O75312"/>
<dbReference type="OMA" id="FREVVIM"/>
<dbReference type="OrthoDB" id="308464at2759"/>
<dbReference type="PAN-GO" id="O75312">
    <property type="GO annotations" value="10 GO annotations based on evolutionary models"/>
</dbReference>
<dbReference type="PhylomeDB" id="O75312"/>
<dbReference type="TreeFam" id="TF313084"/>
<dbReference type="PathwayCommons" id="O75312"/>
<dbReference type="SignaLink" id="O75312"/>
<dbReference type="BioGRID-ORCS" id="8882">
    <property type="hits" value="815 hits in 1192 CRISPR screens"/>
</dbReference>
<dbReference type="GeneWiki" id="ZNF259"/>
<dbReference type="GenomeRNAi" id="8882"/>
<dbReference type="Pharos" id="O75312">
    <property type="development level" value="Tbio"/>
</dbReference>
<dbReference type="PRO" id="PR:O75312"/>
<dbReference type="Proteomes" id="UP000005640">
    <property type="component" value="Chromosome 11"/>
</dbReference>
<dbReference type="RNAct" id="O75312">
    <property type="molecule type" value="protein"/>
</dbReference>
<dbReference type="Bgee" id="ENSG00000109917">
    <property type="expression patterns" value="Expressed in cortical plate and 193 other cell types or tissues"/>
</dbReference>
<dbReference type="ExpressionAtlas" id="O75312">
    <property type="expression patterns" value="baseline and differential"/>
</dbReference>
<dbReference type="GO" id="GO:0030424">
    <property type="term" value="C:axon"/>
    <property type="evidence" value="ECO:0000250"/>
    <property type="project" value="UniProtKB"/>
</dbReference>
<dbReference type="GO" id="GO:0015030">
    <property type="term" value="C:Cajal body"/>
    <property type="evidence" value="ECO:0000314"/>
    <property type="project" value="UniProtKB"/>
</dbReference>
<dbReference type="GO" id="GO:0005737">
    <property type="term" value="C:cytoplasm"/>
    <property type="evidence" value="ECO:0000314"/>
    <property type="project" value="UniProtKB"/>
</dbReference>
<dbReference type="GO" id="GO:0097504">
    <property type="term" value="C:Gemini of Cajal bodies"/>
    <property type="evidence" value="ECO:0000314"/>
    <property type="project" value="UniProtKB"/>
</dbReference>
<dbReference type="GO" id="GO:0030426">
    <property type="term" value="C:growth cone"/>
    <property type="evidence" value="ECO:0000250"/>
    <property type="project" value="UniProtKB"/>
</dbReference>
<dbReference type="GO" id="GO:0043025">
    <property type="term" value="C:neuronal cell body"/>
    <property type="evidence" value="ECO:0000250"/>
    <property type="project" value="UniProtKB"/>
</dbReference>
<dbReference type="GO" id="GO:0005730">
    <property type="term" value="C:nucleolus"/>
    <property type="evidence" value="ECO:0000314"/>
    <property type="project" value="UniProtKB"/>
</dbReference>
<dbReference type="GO" id="GO:0005654">
    <property type="term" value="C:nucleoplasm"/>
    <property type="evidence" value="ECO:0000314"/>
    <property type="project" value="UniProtKB"/>
</dbReference>
<dbReference type="GO" id="GO:0005634">
    <property type="term" value="C:nucleus"/>
    <property type="evidence" value="ECO:0000314"/>
    <property type="project" value="UniProtKB"/>
</dbReference>
<dbReference type="GO" id="GO:0043204">
    <property type="term" value="C:perikaryon"/>
    <property type="evidence" value="ECO:0000250"/>
    <property type="project" value="UniProtKB"/>
</dbReference>
<dbReference type="GO" id="GO:0048471">
    <property type="term" value="C:perinuclear region of cytoplasm"/>
    <property type="evidence" value="ECO:0007669"/>
    <property type="project" value="UniProtKB-SubCell"/>
</dbReference>
<dbReference type="GO" id="GO:0044183">
    <property type="term" value="F:protein folding chaperone"/>
    <property type="evidence" value="ECO:0000250"/>
    <property type="project" value="UniProtKB"/>
</dbReference>
<dbReference type="GO" id="GO:0030971">
    <property type="term" value="F:receptor tyrosine kinase binding"/>
    <property type="evidence" value="ECO:0007669"/>
    <property type="project" value="Ensembl"/>
</dbReference>
<dbReference type="GO" id="GO:0031369">
    <property type="term" value="F:translation initiation factor binding"/>
    <property type="evidence" value="ECO:0000353"/>
    <property type="project" value="UniProtKB"/>
</dbReference>
<dbReference type="GO" id="GO:0008270">
    <property type="term" value="F:zinc ion binding"/>
    <property type="evidence" value="ECO:0007669"/>
    <property type="project" value="UniProtKB-KW"/>
</dbReference>
<dbReference type="GO" id="GO:1902742">
    <property type="term" value="P:apoptotic process involved in development"/>
    <property type="evidence" value="ECO:0000250"/>
    <property type="project" value="UniProtKB"/>
</dbReference>
<dbReference type="GO" id="GO:0061564">
    <property type="term" value="P:axon development"/>
    <property type="evidence" value="ECO:0000315"/>
    <property type="project" value="UniProtKB"/>
</dbReference>
<dbReference type="GO" id="GO:0030576">
    <property type="term" value="P:Cajal body organization"/>
    <property type="evidence" value="ECO:0000250"/>
    <property type="project" value="UniProtKB"/>
</dbReference>
<dbReference type="GO" id="GO:0071364">
    <property type="term" value="P:cellular response to epidermal growth factor stimulus"/>
    <property type="evidence" value="ECO:0000314"/>
    <property type="project" value="UniProtKB"/>
</dbReference>
<dbReference type="GO" id="GO:0042023">
    <property type="term" value="P:DNA endoreduplication"/>
    <property type="evidence" value="ECO:0000250"/>
    <property type="project" value="UniProtKB"/>
</dbReference>
<dbReference type="GO" id="GO:0006260">
    <property type="term" value="P:DNA replication"/>
    <property type="evidence" value="ECO:0000315"/>
    <property type="project" value="UniProtKB"/>
</dbReference>
<dbReference type="GO" id="GO:0001833">
    <property type="term" value="P:inner cell mass cell proliferation"/>
    <property type="evidence" value="ECO:0007669"/>
    <property type="project" value="Ensembl"/>
</dbReference>
<dbReference type="GO" id="GO:0000226">
    <property type="term" value="P:microtubule cytoskeleton organization"/>
    <property type="evidence" value="ECO:0000250"/>
    <property type="project" value="UniProtKB"/>
</dbReference>
<dbReference type="GO" id="GO:0006397">
    <property type="term" value="P:mRNA processing"/>
    <property type="evidence" value="ECO:0007669"/>
    <property type="project" value="UniProtKB-KW"/>
</dbReference>
<dbReference type="GO" id="GO:2000672">
    <property type="term" value="P:negative regulation of motor neuron apoptotic process"/>
    <property type="evidence" value="ECO:0000250"/>
    <property type="project" value="UniProtKB"/>
</dbReference>
<dbReference type="GO" id="GO:0045787">
    <property type="term" value="P:positive regulation of cell cycle"/>
    <property type="evidence" value="ECO:0000315"/>
    <property type="project" value="UniProtKB"/>
</dbReference>
<dbReference type="GO" id="GO:0010628">
    <property type="term" value="P:positive regulation of gene expression"/>
    <property type="evidence" value="ECO:0000315"/>
    <property type="project" value="UniProtKB"/>
</dbReference>
<dbReference type="GO" id="GO:0045927">
    <property type="term" value="P:positive regulation of growth"/>
    <property type="evidence" value="ECO:0000250"/>
    <property type="project" value="UniProtKB"/>
</dbReference>
<dbReference type="GO" id="GO:0042307">
    <property type="term" value="P:positive regulation of protein import into nucleus"/>
    <property type="evidence" value="ECO:0000314"/>
    <property type="project" value="UniProtKB"/>
</dbReference>
<dbReference type="GO" id="GO:0033120">
    <property type="term" value="P:positive regulation of RNA splicing"/>
    <property type="evidence" value="ECO:0000315"/>
    <property type="project" value="UniProtKB"/>
</dbReference>
<dbReference type="GO" id="GO:1990261">
    <property type="term" value="P:pre-mRNA catabolic process"/>
    <property type="evidence" value="ECO:0000315"/>
    <property type="project" value="UniProtKB"/>
</dbReference>
<dbReference type="GO" id="GO:0006457">
    <property type="term" value="P:protein folding"/>
    <property type="evidence" value="ECO:0000250"/>
    <property type="project" value="UniProtKB"/>
</dbReference>
<dbReference type="GO" id="GO:0031641">
    <property type="term" value="P:regulation of myelination"/>
    <property type="evidence" value="ECO:0000250"/>
    <property type="project" value="UniProtKB"/>
</dbReference>
<dbReference type="GO" id="GO:0008380">
    <property type="term" value="P:RNA splicing"/>
    <property type="evidence" value="ECO:0007669"/>
    <property type="project" value="UniProtKB-KW"/>
</dbReference>
<dbReference type="GO" id="GO:0007165">
    <property type="term" value="P:signal transduction"/>
    <property type="evidence" value="ECO:0000304"/>
    <property type="project" value="ProtInc"/>
</dbReference>
<dbReference type="GO" id="GO:0021510">
    <property type="term" value="P:spinal cord development"/>
    <property type="evidence" value="ECO:0000250"/>
    <property type="project" value="UniProtKB"/>
</dbReference>
<dbReference type="GO" id="GO:0001834">
    <property type="term" value="P:trophectodermal cell proliferation"/>
    <property type="evidence" value="ECO:0000250"/>
    <property type="project" value="UniProtKB"/>
</dbReference>
<dbReference type="FunFam" id="2.20.25.420:FF:000001">
    <property type="entry name" value="Zinc finger protein ZPR1"/>
    <property type="match status" value="1"/>
</dbReference>
<dbReference type="FunFam" id="2.60.120.1040:FF:000001">
    <property type="entry name" value="Zinc finger protein ZPR1"/>
    <property type="match status" value="1"/>
</dbReference>
<dbReference type="FunFam" id="2.20.25.420:FF:000003">
    <property type="entry name" value="zinc finger protein ZPR1"/>
    <property type="match status" value="1"/>
</dbReference>
<dbReference type="FunFam" id="2.60.120.1040:FF:000002">
    <property type="entry name" value="zinc finger protein ZPR1"/>
    <property type="match status" value="1"/>
</dbReference>
<dbReference type="Gene3D" id="2.60.120.1040">
    <property type="entry name" value="ZPR1, A/B domain"/>
    <property type="match status" value="2"/>
</dbReference>
<dbReference type="Gene3D" id="2.20.25.420">
    <property type="entry name" value="ZPR1, zinc finger domain"/>
    <property type="match status" value="2"/>
</dbReference>
<dbReference type="InterPro" id="IPR004457">
    <property type="entry name" value="Znf_ZPR1"/>
</dbReference>
<dbReference type="InterPro" id="IPR040141">
    <property type="entry name" value="ZPR1"/>
</dbReference>
<dbReference type="InterPro" id="IPR042451">
    <property type="entry name" value="ZPR1_A/B_dom"/>
</dbReference>
<dbReference type="InterPro" id="IPR056180">
    <property type="entry name" value="ZPR1_jr_dom"/>
</dbReference>
<dbReference type="InterPro" id="IPR042452">
    <property type="entry name" value="ZPR1_Znf1/2"/>
</dbReference>
<dbReference type="NCBIfam" id="TIGR00310">
    <property type="entry name" value="ZPR1_znf"/>
    <property type="match status" value="2"/>
</dbReference>
<dbReference type="PANTHER" id="PTHR10876">
    <property type="entry name" value="ZINC FINGER PROTEIN ZPR1"/>
    <property type="match status" value="1"/>
</dbReference>
<dbReference type="PANTHER" id="PTHR10876:SF3">
    <property type="entry name" value="ZINC FINGER PROTEIN ZPR1"/>
    <property type="match status" value="1"/>
</dbReference>
<dbReference type="Pfam" id="PF22794">
    <property type="entry name" value="jr-ZPR1"/>
    <property type="match status" value="2"/>
</dbReference>
<dbReference type="Pfam" id="PF03367">
    <property type="entry name" value="Zn_ribbon_ZPR1"/>
    <property type="match status" value="2"/>
</dbReference>
<dbReference type="SMART" id="SM00709">
    <property type="entry name" value="Zpr1"/>
    <property type="match status" value="2"/>
</dbReference>
<protein>
    <recommendedName>
        <fullName>Zinc finger protein ZPR1</fullName>
    </recommendedName>
    <alternativeName>
        <fullName>Zinc finger protein 259</fullName>
    </alternativeName>
</protein>
<feature type="chain" id="PRO_0000119036" description="Zinc finger protein ZPR1">
    <location>
        <begin position="1"/>
        <end position="459"/>
    </location>
</feature>
<feature type="zinc finger region" description="C4-type 1" evidence="8">
    <location>
        <begin position="51"/>
        <end position="83"/>
    </location>
</feature>
<feature type="zinc finger region" description="C4-type 2" evidence="8">
    <location>
        <begin position="259"/>
        <end position="291"/>
    </location>
</feature>
<feature type="region of interest" description="Disordered" evidence="2">
    <location>
        <begin position="1"/>
        <end position="32"/>
    </location>
</feature>
<feature type="region of interest" description="Disordered" evidence="2">
    <location>
        <begin position="439"/>
        <end position="459"/>
    </location>
</feature>
<feature type="compositionally biased region" description="Low complexity" evidence="2">
    <location>
        <begin position="1"/>
        <end position="18"/>
    </location>
</feature>
<feature type="compositionally biased region" description="Pro residues" evidence="2">
    <location>
        <begin position="19"/>
        <end position="28"/>
    </location>
</feature>
<feature type="sequence variant" id="VAR_085794" description="In GKAF; uncertain significance; homozygous patient fibroblasts have impaired ability to progress through the cell cycle; decreased protein abundance in patient fibroblasts; dbSNP:rs368697578." evidence="7">
    <original>I</original>
    <variation>T</variation>
    <location>
        <position position="196"/>
    </location>
</feature>
<feature type="sequence variant" id="VAR_052999" description="In dbSNP:rs35120633.">
    <original>A</original>
    <variation>V</variation>
    <location>
        <position position="264"/>
    </location>
</feature>
<name>ZPR1_HUMAN</name>
<comment type="function">
    <text evidence="3 5 6 7">Acts as a signaling molecule that communicates proliferative growth signals from the cytoplasm to the nucleus. It is involved in the positive regulation of cell cycle progression (PubMed:29851065). Plays a role for the localization and accumulation of the survival motor neuron protein SMN1 in sub-nuclear bodies, including gems and Cajal bodies. Induces neuron differentiation and stimulates axonal growth and formation of growth cone in spinal cord motor neurons. Plays a role in the splicing of cellular pre-mRNAs. May be involved in H(2)O(2)-induced neuronal cell death.</text>
</comment>
<comment type="subunit">
    <text evidence="3 4 8 9">Component of an import snRNP complex composed of KPNB1, SNUPN, SMN1 and ZNF259. Interacts (via C-terminal region) with SMN1 (via C-terminal region); the interaction occurs after treatment with serum. Interacts with elongation factor 1-alpha EEF1A1; the interaction occurs in a epidermal growth factor (EGF)-dependent manner. Interacts (via zinc fingers) with EGFR (via C-terminal cytoplasmic kinase domain); the interaction is negatively regulated in response to epidermal growth factor (EGF) stimulation and the EGFR kinase activity. May also bind to the PDGFR receptor.</text>
</comment>
<comment type="subcellular location">
    <subcellularLocation>
        <location>Nucleus</location>
    </subcellularLocation>
    <subcellularLocation>
        <location>Nucleus</location>
        <location>Nucleolus</location>
    </subcellularLocation>
    <subcellularLocation>
        <location>Nucleus</location>
        <location>Gem</location>
    </subcellularLocation>
    <subcellularLocation>
        <location>Nucleus</location>
        <location>Cajal body</location>
    </subcellularLocation>
    <subcellularLocation>
        <location>Cytoplasm</location>
        <location>Perinuclear region</location>
    </subcellularLocation>
    <subcellularLocation>
        <location>Cytoplasm</location>
    </subcellularLocation>
    <subcellularLocation>
        <location evidence="1">Cell projection</location>
        <location evidence="1">Axon</location>
    </subcellularLocation>
    <subcellularLocation>
        <location evidence="1">Cell projection</location>
        <location evidence="1">Growth cone</location>
    </subcellularLocation>
    <text evidence="1">Colocalized with SMN1 in Gemini of coiled bodies (gems), Cajal bodies, axon and growth cones of neurons (By similarity). Localized predominantly in the cytoplasm in serum-starved cells growth arrested in G0 of the mitotic cell cycle. Localized both in the nucleus and cytoplasm at the G1 phase of the mitotic cell cycle. Accumulates in the subnuclear bodies during progression into the S phase of the mitotic cell cycle. Diffusely localized throughout the cell during mitosis. Colocalized with NPAT and SMN1 in nuclear bodies including gems (Gemini of coiled bodies) and Cajal bodies in a cell cycle-dependent manner. Translocates together with EEF1A1 from the cytoplasm to the nucleolus after treatment with mitogens. Colocalized with EGFR in the cytoplasm of quiescent cells. Translocates from the cytoplasm to the nucleus in a epidermal growth factor (EGF)-dependent manner.</text>
</comment>
<comment type="tissue specificity">
    <text evidence="6">Expressed in fibroblast; weakly expressed in fibroblast of spinal muscular atrophy (SMA) patients.</text>
</comment>
<comment type="disease" evidence="7">
    <disease id="DI-06106">
        <name>Growth restriction, hypoplastic kidneys, alopecia, and distinctive facies</name>
        <acronym>GKAF</acronym>
        <description>An autosomal recessive disorder characterized by pre- and postnatal growth restriction with microcephaly, distinctive craniofacial features, congenital alopecia, hypoplastic kidneys with renal insufficiency, global developmental delay, severe congenital sensorineural hearing loss, hydrocephalus, genital hypoplasia, and early mortality.</description>
        <dbReference type="MIM" id="619321"/>
    </disease>
    <text>The disease may be caused by variants affecting the gene represented in this entry.</text>
</comment>
<comment type="similarity">
    <text evidence="10">Belongs to the ZPR1 family.</text>
</comment>
<sequence>MAASGAVEPGPPGAAVAPSPAPAPPPAPDHLFRPISAEDEEQQPTEIESLCMNCYCNGMTRLLLTKIPFFREIIVSSFSCEHCGWNNTEIQSAGRIQDQGVRYTLSVRALEDMNREVVKTDSAATRIPELDFEIPAFSQKGALTTVEGLITRAISGLEQDQPARRANKDATAERIDEFIVKLKELKQVASPFTLIIDDPSGNSFVENPHAPQKDDALVITHYNRTRQQEEMLGLQEEAPAEKPEEEDLRNEVLQFSTNCPECNAPAQTNMKLVQIPHFKEVIIMATNCENCGHRTNEVKSGGAVEPLGTRITLHITDASDMTRDLLKSETCSVEIPELEFELGMAVLGGKFTTLEGLLKDIRELVTKNPFTLGDSSNPGQTERLQEFSQKMDQIIEGNMKAHFIMDDPAGNSYLQNVYAPEDDPEMKVERYKRTFDQNEELGLNDMKTEGYEAGLAPQR</sequence>
<gene>
    <name type="primary">ZPR1</name>
    <name type="synonym">ZNF259</name>
</gene>
<evidence type="ECO:0000250" key="1"/>
<evidence type="ECO:0000256" key="2">
    <source>
        <dbReference type="SAM" id="MobiDB-lite"/>
    </source>
</evidence>
<evidence type="ECO:0000269" key="3">
    <source>
    </source>
</evidence>
<evidence type="ECO:0000269" key="4">
    <source>
    </source>
</evidence>
<evidence type="ECO:0000269" key="5">
    <source>
    </source>
</evidence>
<evidence type="ECO:0000269" key="6">
    <source>
    </source>
</evidence>
<evidence type="ECO:0000269" key="7">
    <source>
    </source>
</evidence>
<evidence type="ECO:0000269" key="8">
    <source>
    </source>
</evidence>
<evidence type="ECO:0000269" key="9">
    <source>
    </source>
</evidence>
<evidence type="ECO:0000305" key="10"/>
<proteinExistence type="evidence at protein level"/>
<organism>
    <name type="scientific">Homo sapiens</name>
    <name type="common">Human</name>
    <dbReference type="NCBI Taxonomy" id="9606"/>
    <lineage>
        <taxon>Eukaryota</taxon>
        <taxon>Metazoa</taxon>
        <taxon>Chordata</taxon>
        <taxon>Craniata</taxon>
        <taxon>Vertebrata</taxon>
        <taxon>Euteleostomi</taxon>
        <taxon>Mammalia</taxon>
        <taxon>Eutheria</taxon>
        <taxon>Euarchontoglires</taxon>
        <taxon>Primates</taxon>
        <taxon>Haplorrhini</taxon>
        <taxon>Catarrhini</taxon>
        <taxon>Hominidae</taxon>
        <taxon>Homo</taxon>
    </lineage>
</organism>
<accession>O75312</accession>
<accession>Q2TAA0</accession>
<reference key="1">
    <citation type="journal article" date="1998" name="J. Cell Biol.">
        <title>Interaction of ZPR1 with translation elongation factor-1alpha in proliferating cells.</title>
        <authorList>
            <person name="Gangwani L."/>
            <person name="Mikrut M."/>
            <person name="Galcheva-Gargova Z."/>
            <person name="Davis R.J."/>
        </authorList>
    </citation>
    <scope>NUCLEOTIDE SEQUENCE [MRNA]</scope>
    <scope>INTERACTION WITH EEF1A1</scope>
</reference>
<reference key="2">
    <citation type="submission" date="2003-05" db="EMBL/GenBank/DDBJ databases">
        <title>Cloning of human full-length CDSs in BD Creator(TM) system donor vector.</title>
        <authorList>
            <person name="Kalnine N."/>
            <person name="Chen X."/>
            <person name="Rolfs A."/>
            <person name="Halleck A."/>
            <person name="Hines L."/>
            <person name="Eisenstein S."/>
            <person name="Koundinya M."/>
            <person name="Raphael J."/>
            <person name="Moreira D."/>
            <person name="Kelley T."/>
            <person name="LaBaer J."/>
            <person name="Lin Y."/>
            <person name="Phelan M."/>
            <person name="Farmer A."/>
        </authorList>
    </citation>
    <scope>NUCLEOTIDE SEQUENCE [LARGE SCALE MRNA]</scope>
</reference>
<reference key="3">
    <citation type="journal article" date="2004" name="Genome Res.">
        <title>The status, quality, and expansion of the NIH full-length cDNA project: the Mammalian Gene Collection (MGC).</title>
        <authorList>
            <consortium name="The MGC Project Team"/>
        </authorList>
    </citation>
    <scope>NUCLEOTIDE SEQUENCE [LARGE SCALE MRNA]</scope>
    <source>
        <tissue>Brain</tissue>
        <tissue>Pancreas</tissue>
        <tissue>Skin</tissue>
    </source>
</reference>
<reference key="4">
    <citation type="journal article" date="1996" name="Science">
        <title>Binding of zinc finger protein ZPR1 to the epidermal growth factor receptor.</title>
        <authorList>
            <person name="Galcheva-Gargova Z."/>
            <person name="Konstantinov K.N."/>
            <person name="Wu I.-H."/>
            <person name="Klier F.G."/>
            <person name="Barrett T."/>
            <person name="Davis R.J."/>
        </authorList>
    </citation>
    <scope>INTERACTION WITH EGFR</scope>
    <scope>SUBCELLULAR LOCATION</scope>
</reference>
<reference key="5">
    <citation type="journal article" date="1998" name="Mol. Biol. Cell">
        <title>The cytoplasmic zinc finger protein ZPR1 accumulates in the nucleolus of proliferating cells.</title>
        <authorList>
            <person name="Galcheva-Gargova Z."/>
            <person name="Gangwani L."/>
            <person name="Konstantinov K.N."/>
            <person name="Mikrut M."/>
            <person name="Theroux S.J."/>
            <person name="Enoch T."/>
            <person name="Davis R.J."/>
        </authorList>
    </citation>
    <scope>SUBCELLULAR LOCATION</scope>
</reference>
<reference key="6">
    <citation type="journal article" date="2001" name="Nat. Cell Biol.">
        <title>Spinal muscular atrophy disrupts the interaction of ZPR1 with the SMN protein.</title>
        <authorList>
            <person name="Gangwani L."/>
            <person name="Mikrut M."/>
            <person name="Theroux S."/>
            <person name="Sharma M."/>
            <person name="Davis R.J."/>
        </authorList>
    </citation>
    <scope>FUNCTION</scope>
    <scope>INTERACTION WITH SMN1</scope>
    <scope>SUBCELLULAR LOCATION</scope>
</reference>
<reference key="7">
    <citation type="journal article" date="2002" name="Hum. Mol. Genet.">
        <title>SMN, the spinal muscular atrophy protein, forms a pre-import snRNP complex with snurportin1 and importin beta.</title>
        <authorList>
            <person name="Narayanan U."/>
            <person name="Ospina J.K."/>
            <person name="Frey M.R."/>
            <person name="Hebert M.D."/>
            <person name="Matera A.G."/>
        </authorList>
    </citation>
    <scope>IDENTIFICATION IN AN IMPORT SNRNP COMPLEX</scope>
</reference>
<reference key="8">
    <citation type="journal article" date="2006" name="J. Biol. Chem.">
        <title>Deficiency of the zinc finger protein ZPR1 causes defects in transcription and cell cycle progression.</title>
        <authorList>
            <person name="Gangwani L."/>
        </authorList>
    </citation>
    <scope>FUNCTION</scope>
    <scope>SUBCELLULAR LOCATION</scope>
</reference>
<reference key="9">
    <citation type="journal article" date="2011" name="BMC Syst. Biol.">
        <title>Initial characterization of the human central proteome.</title>
        <authorList>
            <person name="Burkard T.R."/>
            <person name="Planyavsky M."/>
            <person name="Kaupe I."/>
            <person name="Breitwieser F.P."/>
            <person name="Buerckstuemmer T."/>
            <person name="Bennett K.L."/>
            <person name="Superti-Furga G."/>
            <person name="Colinge J."/>
        </authorList>
    </citation>
    <scope>IDENTIFICATION BY MASS SPECTROMETRY [LARGE SCALE ANALYSIS]</scope>
</reference>
<reference key="10">
    <citation type="journal article" date="2012" name="Hum. Mol. Genet.">
        <title>The zinc finger protein ZPR1 is a potential modifier of spinal muscular atrophy.</title>
        <authorList>
            <person name="Ahmad S."/>
            <person name="Wang Y."/>
            <person name="Shaik G.M."/>
            <person name="Burghes A.H."/>
            <person name="Gangwani L."/>
        </authorList>
    </citation>
    <scope>FUNCTION</scope>
    <scope>SUBCELLULAR LOCATION</scope>
    <scope>TISSUE SPECIFICITY</scope>
</reference>
<reference key="11">
    <citation type="journal article" date="2018" name="Clin. Genet.">
        <title>A ZPR1 mutation is associated with a novel syndrome of growth restriction, distinct craniofacial features, alopecia, and hypoplastic kidneys.</title>
        <authorList>
            <consortium name="Care4Rare Canada Consortium"/>
            <person name="Ito Y.A."/>
            <person name="Smith A.C."/>
            <person name="Kernohan K.D."/>
            <person name="Pena I.A."/>
            <person name="Ahmed A."/>
            <person name="McDonell L.M."/>
            <person name="Beaulieu C."/>
            <person name="Bulman D.E."/>
            <person name="Smidt A."/>
            <person name="Sawyer S.L."/>
            <person name="Dyment D.A."/>
            <person name="Boycott K.M."/>
            <person name="Clericuzio C.L."/>
        </authorList>
    </citation>
    <scope>FUNCTION</scope>
    <scope>INVOLVEMENT IN GKAF</scope>
    <scope>VARIANT GKAF THR-196</scope>
    <scope>CHARACTERIZATION OF VARIANT GKAF THR-196</scope>
</reference>
<keyword id="KW-0966">Cell projection</keyword>
<keyword id="KW-0963">Cytoplasm</keyword>
<keyword id="KW-0209">Deafness</keyword>
<keyword id="KW-0221">Differentiation</keyword>
<keyword id="KW-0242">Dwarfism</keyword>
<keyword id="KW-1063">Hypotrichosis</keyword>
<keyword id="KW-0479">Metal-binding</keyword>
<keyword id="KW-0507">mRNA processing</keyword>
<keyword id="KW-0508">mRNA splicing</keyword>
<keyword id="KW-0539">Nucleus</keyword>
<keyword id="KW-1267">Proteomics identification</keyword>
<keyword id="KW-1185">Reference proteome</keyword>
<keyword id="KW-0677">Repeat</keyword>
<keyword id="KW-0862">Zinc</keyword>
<keyword id="KW-0863">Zinc-finger</keyword>